<protein>
    <recommendedName>
        <fullName>UDP-glucuronosyltransferase 2C1</fullName>
        <shortName>UDPGT 2C1</shortName>
        <ecNumber>2.4.1.17</ecNumber>
    </recommendedName>
</protein>
<organism>
    <name type="scientific">Oryctolagus cuniculus</name>
    <name type="common">Rabbit</name>
    <dbReference type="NCBI Taxonomy" id="9986"/>
    <lineage>
        <taxon>Eukaryota</taxon>
        <taxon>Metazoa</taxon>
        <taxon>Chordata</taxon>
        <taxon>Craniata</taxon>
        <taxon>Vertebrata</taxon>
        <taxon>Euteleostomi</taxon>
        <taxon>Mammalia</taxon>
        <taxon>Eutheria</taxon>
        <taxon>Euarchontoglires</taxon>
        <taxon>Glires</taxon>
        <taxon>Lagomorpha</taxon>
        <taxon>Leporidae</taxon>
        <taxon>Oryctolagus</taxon>
    </lineage>
</organism>
<comment type="function">
    <text>UDPGT is of major importance in the conjugation and subsequent elimination of potentially toxic xenobiotics and endogenous compounds.</text>
</comment>
<comment type="catalytic activity">
    <reaction>
        <text>glucuronate acceptor + UDP-alpha-D-glucuronate = acceptor beta-D-glucuronoside + UDP + H(+)</text>
        <dbReference type="Rhea" id="RHEA:21032"/>
        <dbReference type="ChEBI" id="CHEBI:15378"/>
        <dbReference type="ChEBI" id="CHEBI:58052"/>
        <dbReference type="ChEBI" id="CHEBI:58223"/>
        <dbReference type="ChEBI" id="CHEBI:132367"/>
        <dbReference type="ChEBI" id="CHEBI:132368"/>
        <dbReference type="EC" id="2.4.1.17"/>
    </reaction>
</comment>
<comment type="subcellular location">
    <subcellularLocation>
        <location evidence="2">Microsome membrane</location>
        <topology evidence="2">Single-pass membrane protein</topology>
    </subcellularLocation>
    <subcellularLocation>
        <location evidence="2">Endoplasmic reticulum membrane</location>
        <topology evidence="2">Single-pass membrane protein</topology>
    </subcellularLocation>
</comment>
<comment type="similarity">
    <text evidence="2">Belongs to the UDP-glycosyltransferase family.</text>
</comment>
<proteinExistence type="evidence at transcript level"/>
<name>UD2C1_RABIT</name>
<gene>
    <name type="primary">UGT2C1</name>
    <name type="synonym">UGT2A2</name>
</gene>
<evidence type="ECO:0000255" key="1"/>
<evidence type="ECO:0000305" key="2"/>
<dbReference type="EC" id="2.4.1.17"/>
<dbReference type="EMBL" id="L01083">
    <property type="protein sequence ID" value="AAA18023.1"/>
    <property type="molecule type" value="mRNA"/>
</dbReference>
<dbReference type="SMR" id="P36514"/>
<dbReference type="STRING" id="9986.ENSOCUP00000023419"/>
<dbReference type="CAZy" id="GT1">
    <property type="family name" value="Glycosyltransferase Family 1"/>
</dbReference>
<dbReference type="GlyCosmos" id="P36514">
    <property type="glycosylation" value="2 sites, No reported glycans"/>
</dbReference>
<dbReference type="PaxDb" id="9986-ENSOCUP00000023419"/>
<dbReference type="eggNOG" id="KOG1192">
    <property type="taxonomic scope" value="Eukaryota"/>
</dbReference>
<dbReference type="InParanoid" id="P36514"/>
<dbReference type="Proteomes" id="UP000001811">
    <property type="component" value="Unplaced"/>
</dbReference>
<dbReference type="GO" id="GO:0005789">
    <property type="term" value="C:endoplasmic reticulum membrane"/>
    <property type="evidence" value="ECO:0007669"/>
    <property type="project" value="UniProtKB-SubCell"/>
</dbReference>
<dbReference type="GO" id="GO:0015020">
    <property type="term" value="F:glucuronosyltransferase activity"/>
    <property type="evidence" value="ECO:0007669"/>
    <property type="project" value="UniProtKB-EC"/>
</dbReference>
<dbReference type="GO" id="GO:0006629">
    <property type="term" value="P:lipid metabolic process"/>
    <property type="evidence" value="ECO:0007669"/>
    <property type="project" value="UniProtKB-KW"/>
</dbReference>
<dbReference type="CDD" id="cd03784">
    <property type="entry name" value="GT1_Gtf-like"/>
    <property type="match status" value="1"/>
</dbReference>
<dbReference type="FunFam" id="3.40.50.2000:FF:000001">
    <property type="entry name" value="UDP-glucuronosyltransferase"/>
    <property type="match status" value="1"/>
</dbReference>
<dbReference type="FunFam" id="3.40.50.2000:FF:000081">
    <property type="entry name" value="UDP-glucuronosyltransferase 2A2"/>
    <property type="match status" value="1"/>
</dbReference>
<dbReference type="Gene3D" id="3.40.50.2000">
    <property type="entry name" value="Glycogen Phosphorylase B"/>
    <property type="match status" value="2"/>
</dbReference>
<dbReference type="InterPro" id="IPR050271">
    <property type="entry name" value="UDP-glycosyltransferase"/>
</dbReference>
<dbReference type="InterPro" id="IPR002213">
    <property type="entry name" value="UDP_glucos_trans"/>
</dbReference>
<dbReference type="InterPro" id="IPR035595">
    <property type="entry name" value="UDP_glycos_trans_CS"/>
</dbReference>
<dbReference type="PANTHER" id="PTHR48043">
    <property type="entry name" value="EG:EG0003.4 PROTEIN-RELATED"/>
    <property type="match status" value="1"/>
</dbReference>
<dbReference type="PANTHER" id="PTHR48043:SF78">
    <property type="entry name" value="UDP-GLUCURONOSYLTRANSFERASE"/>
    <property type="match status" value="1"/>
</dbReference>
<dbReference type="Pfam" id="PF00201">
    <property type="entry name" value="UDPGT"/>
    <property type="match status" value="1"/>
</dbReference>
<dbReference type="SUPFAM" id="SSF53756">
    <property type="entry name" value="UDP-Glycosyltransferase/glycogen phosphorylase"/>
    <property type="match status" value="1"/>
</dbReference>
<dbReference type="PROSITE" id="PS00375">
    <property type="entry name" value="UDPGT"/>
    <property type="match status" value="1"/>
</dbReference>
<accession>P36514</accession>
<reference key="1">
    <citation type="journal article" date="1993" name="J. Biol. Chem.">
        <title>Cloning and characterization of rabbit liver UDP-glucuronosyltransferase cDNAs. Developmental and inducible expression of 4-hydroxybiphenyl UGT2B13.</title>
        <authorList>
            <person name="Tukey R.H."/>
            <person name="Pendurthi U.R."/>
            <person name="Nguyen N.T."/>
            <person name="Green M.D."/>
            <person name="Tephly T.R."/>
        </authorList>
    </citation>
    <scope>NUCLEOTIDE SEQUENCE [MRNA]</scope>
    <source>
        <strain>New Zealand white</strain>
        <tissue>Liver</tissue>
    </source>
</reference>
<keyword id="KW-0256">Endoplasmic reticulum</keyword>
<keyword id="KW-0325">Glycoprotein</keyword>
<keyword id="KW-0328">Glycosyltransferase</keyword>
<keyword id="KW-0443">Lipid metabolism</keyword>
<keyword id="KW-0472">Membrane</keyword>
<keyword id="KW-0492">Microsome</keyword>
<keyword id="KW-1185">Reference proteome</keyword>
<keyword id="KW-0808">Transferase</keyword>
<keyword id="KW-0812">Transmembrane</keyword>
<keyword id="KW-1133">Transmembrane helix</keyword>
<feature type="chain" id="PRO_0000074136" description="UDP-glucuronosyltransferase 2C1">
    <location>
        <begin position="1" status="less than"/>
        <end position="502"/>
    </location>
</feature>
<feature type="transmembrane region" description="Helical" evidence="1">
    <location>
        <begin position="466"/>
        <end position="481"/>
    </location>
</feature>
<feature type="glycosylation site" description="N-linked (GlcNAc...) asparagine" evidence="1">
    <location>
        <position position="177"/>
    </location>
</feature>
<feature type="glycosylation site" description="N-linked (GlcNAc...) asparagine" evidence="1">
    <location>
        <position position="288"/>
    </location>
</feature>
<feature type="non-terminal residue">
    <location>
        <position position="1"/>
    </location>
</feature>
<sequence length="502" mass="57449">AAAMDFSHWINLKVILEELQLRGHEITVLVPSPSLLLDHTKIPFNVEVLQLQVTKETLMEELNTVLYMSSFELPTLSWWKVLGKMVEMGKQFSKNLRRVCDSAITNKELLDRLKAAKFDICLADPLAFCGELVAELLNIPFVYSFRFSIGNIIERSCAGLPTPSSYVPGSTSGLTDNMSFVQRLKNWLLYLMNDMMFSHFMLSEWDEYYSKVLGRRTTICEIMGKAEMWLIRSYWDFEFPRPFLPNFEYVGGLHCKPAKPLPEELEEFVQSSGNDGVVVFTLGSMIQNLTEERSNLIASALAQIPQKVLWRYTGKKPATLGPNTRLFEWIPQNDLLGHPKTRAFITHGGTNGLYEAIYHGVPMVGIPLFGDQPDNIARVKAKGAAVDVDLRIMTTSSLLKALKDVINNPSYKENAMKLSRIHHDQPLKPLDRAVFWIEFVMRHKGARHLRVAAHDLTWFQYYSLDVVVFLLTCVATIIFLAKKCCLFFYRRFCKTGNKRKRE</sequence>